<name>RIMM_PROMM</name>
<sequence length="176" mass="19282">MNGDEDWLTVGKVVAAQGMQGELRINPSSDFPERFTLPGQRWLKERNGEPRPIELLTGRQLPGRSLYVVKFAGVNNRNAAEALVGQKLLVPSSDRPSLAEGEFHLLDLVGLEARLQAEGPAIGHVIDLTTAGNDLLEIELLTGRRVLVPFVEAIVPEVQLNQGWLRLTPPPGLLEL</sequence>
<organism>
    <name type="scientific">Prochlorococcus marinus (strain MIT 9313)</name>
    <dbReference type="NCBI Taxonomy" id="74547"/>
    <lineage>
        <taxon>Bacteria</taxon>
        <taxon>Bacillati</taxon>
        <taxon>Cyanobacteriota</taxon>
        <taxon>Cyanophyceae</taxon>
        <taxon>Synechococcales</taxon>
        <taxon>Prochlorococcaceae</taxon>
        <taxon>Prochlorococcus</taxon>
    </lineage>
</organism>
<evidence type="ECO:0000255" key="1">
    <source>
        <dbReference type="HAMAP-Rule" id="MF_00014"/>
    </source>
</evidence>
<evidence type="ECO:0000305" key="2"/>
<reference key="1">
    <citation type="journal article" date="2003" name="Nature">
        <title>Genome divergence in two Prochlorococcus ecotypes reflects oceanic niche differentiation.</title>
        <authorList>
            <person name="Rocap G."/>
            <person name="Larimer F.W."/>
            <person name="Lamerdin J.E."/>
            <person name="Malfatti S."/>
            <person name="Chain P."/>
            <person name="Ahlgren N.A."/>
            <person name="Arellano A."/>
            <person name="Coleman M."/>
            <person name="Hauser L."/>
            <person name="Hess W.R."/>
            <person name="Johnson Z.I."/>
            <person name="Land M.L."/>
            <person name="Lindell D."/>
            <person name="Post A.F."/>
            <person name="Regala W."/>
            <person name="Shah M."/>
            <person name="Shaw S.L."/>
            <person name="Steglich C."/>
            <person name="Sullivan M.B."/>
            <person name="Ting C.S."/>
            <person name="Tolonen A."/>
            <person name="Webb E.A."/>
            <person name="Zinser E.R."/>
            <person name="Chisholm S.W."/>
        </authorList>
    </citation>
    <scope>NUCLEOTIDE SEQUENCE [LARGE SCALE GENOMIC DNA]</scope>
    <source>
        <strain>MIT 9313</strain>
    </source>
</reference>
<accession>Q7V4K0</accession>
<keyword id="KW-0143">Chaperone</keyword>
<keyword id="KW-0963">Cytoplasm</keyword>
<keyword id="KW-1185">Reference proteome</keyword>
<keyword id="KW-0690">Ribosome biogenesis</keyword>
<keyword id="KW-0698">rRNA processing</keyword>
<proteinExistence type="inferred from homology"/>
<gene>
    <name evidence="1" type="primary">rimM</name>
    <name type="ordered locus">PMT_1951</name>
</gene>
<dbReference type="EMBL" id="BX548175">
    <property type="protein sequence ID" value="CAE22125.1"/>
    <property type="status" value="ALT_INIT"/>
    <property type="molecule type" value="Genomic_DNA"/>
</dbReference>
<dbReference type="RefSeq" id="WP_011131316.1">
    <property type="nucleotide sequence ID" value="NC_005071.1"/>
</dbReference>
<dbReference type="SMR" id="Q7V4K0"/>
<dbReference type="KEGG" id="pmt:PMT_1951"/>
<dbReference type="eggNOG" id="COG0806">
    <property type="taxonomic scope" value="Bacteria"/>
</dbReference>
<dbReference type="HOGENOM" id="CLU_077636_3_0_3"/>
<dbReference type="OrthoDB" id="9810331at2"/>
<dbReference type="Proteomes" id="UP000001423">
    <property type="component" value="Chromosome"/>
</dbReference>
<dbReference type="GO" id="GO:0005737">
    <property type="term" value="C:cytoplasm"/>
    <property type="evidence" value="ECO:0007669"/>
    <property type="project" value="UniProtKB-SubCell"/>
</dbReference>
<dbReference type="GO" id="GO:0005840">
    <property type="term" value="C:ribosome"/>
    <property type="evidence" value="ECO:0007669"/>
    <property type="project" value="InterPro"/>
</dbReference>
<dbReference type="GO" id="GO:0043022">
    <property type="term" value="F:ribosome binding"/>
    <property type="evidence" value="ECO:0007669"/>
    <property type="project" value="InterPro"/>
</dbReference>
<dbReference type="GO" id="GO:0042274">
    <property type="term" value="P:ribosomal small subunit biogenesis"/>
    <property type="evidence" value="ECO:0007669"/>
    <property type="project" value="UniProtKB-UniRule"/>
</dbReference>
<dbReference type="GO" id="GO:0006364">
    <property type="term" value="P:rRNA processing"/>
    <property type="evidence" value="ECO:0007669"/>
    <property type="project" value="UniProtKB-UniRule"/>
</dbReference>
<dbReference type="Gene3D" id="2.30.30.240">
    <property type="entry name" value="PRC-barrel domain"/>
    <property type="match status" value="1"/>
</dbReference>
<dbReference type="Gene3D" id="2.40.30.60">
    <property type="entry name" value="RimM"/>
    <property type="match status" value="1"/>
</dbReference>
<dbReference type="HAMAP" id="MF_00014">
    <property type="entry name" value="Ribosome_mat_RimM"/>
    <property type="match status" value="1"/>
</dbReference>
<dbReference type="InterPro" id="IPR011033">
    <property type="entry name" value="PRC_barrel-like_sf"/>
</dbReference>
<dbReference type="InterPro" id="IPR056792">
    <property type="entry name" value="PRC_RimM"/>
</dbReference>
<dbReference type="InterPro" id="IPR011961">
    <property type="entry name" value="RimM"/>
</dbReference>
<dbReference type="InterPro" id="IPR002676">
    <property type="entry name" value="RimM_N"/>
</dbReference>
<dbReference type="InterPro" id="IPR036976">
    <property type="entry name" value="RimM_N_sf"/>
</dbReference>
<dbReference type="InterPro" id="IPR009000">
    <property type="entry name" value="Transl_B-barrel_sf"/>
</dbReference>
<dbReference type="NCBIfam" id="TIGR02273">
    <property type="entry name" value="16S_RimM"/>
    <property type="match status" value="1"/>
</dbReference>
<dbReference type="PANTHER" id="PTHR33692">
    <property type="entry name" value="RIBOSOME MATURATION FACTOR RIMM"/>
    <property type="match status" value="1"/>
</dbReference>
<dbReference type="PANTHER" id="PTHR33692:SF1">
    <property type="entry name" value="RIBOSOME MATURATION FACTOR RIMM"/>
    <property type="match status" value="1"/>
</dbReference>
<dbReference type="Pfam" id="PF24986">
    <property type="entry name" value="PRC_RimM"/>
    <property type="match status" value="1"/>
</dbReference>
<dbReference type="Pfam" id="PF01782">
    <property type="entry name" value="RimM"/>
    <property type="match status" value="1"/>
</dbReference>
<dbReference type="SUPFAM" id="SSF50346">
    <property type="entry name" value="PRC-barrel domain"/>
    <property type="match status" value="1"/>
</dbReference>
<dbReference type="SUPFAM" id="SSF50447">
    <property type="entry name" value="Translation proteins"/>
    <property type="match status" value="1"/>
</dbReference>
<protein>
    <recommendedName>
        <fullName evidence="1">Ribosome maturation factor RimM</fullName>
    </recommendedName>
</protein>
<feature type="chain" id="PRO_0000163333" description="Ribosome maturation factor RimM">
    <location>
        <begin position="1"/>
        <end position="176"/>
    </location>
</feature>
<feature type="domain" description="PRC barrel" evidence="1">
    <location>
        <begin position="100"/>
        <end position="173"/>
    </location>
</feature>
<comment type="function">
    <text evidence="1">An accessory protein needed during the final step in the assembly of 30S ribosomal subunit, possibly for assembly of the head region. Essential for efficient processing of 16S rRNA. May be needed both before and after RbfA during the maturation of 16S rRNA. It has affinity for free ribosomal 30S subunits but not for 70S ribosomes.</text>
</comment>
<comment type="subunit">
    <text evidence="1">Binds ribosomal protein uS19.</text>
</comment>
<comment type="subcellular location">
    <subcellularLocation>
        <location evidence="1">Cytoplasm</location>
    </subcellularLocation>
</comment>
<comment type="domain">
    <text evidence="1">The PRC barrel domain binds ribosomal protein uS19.</text>
</comment>
<comment type="similarity">
    <text evidence="1">Belongs to the RimM family.</text>
</comment>
<comment type="sequence caution" evidence="2">
    <conflict type="erroneous initiation">
        <sequence resource="EMBL-CDS" id="CAE22125"/>
    </conflict>
</comment>